<reference key="1">
    <citation type="journal article" date="2005" name="Science">
        <title>The transcriptional landscape of the mammalian genome.</title>
        <authorList>
            <person name="Carninci P."/>
            <person name="Kasukawa T."/>
            <person name="Katayama S."/>
            <person name="Gough J."/>
            <person name="Frith M.C."/>
            <person name="Maeda N."/>
            <person name="Oyama R."/>
            <person name="Ravasi T."/>
            <person name="Lenhard B."/>
            <person name="Wells C."/>
            <person name="Kodzius R."/>
            <person name="Shimokawa K."/>
            <person name="Bajic V.B."/>
            <person name="Brenner S.E."/>
            <person name="Batalov S."/>
            <person name="Forrest A.R."/>
            <person name="Zavolan M."/>
            <person name="Davis M.J."/>
            <person name="Wilming L.G."/>
            <person name="Aidinis V."/>
            <person name="Allen J.E."/>
            <person name="Ambesi-Impiombato A."/>
            <person name="Apweiler R."/>
            <person name="Aturaliya R.N."/>
            <person name="Bailey T.L."/>
            <person name="Bansal M."/>
            <person name="Baxter L."/>
            <person name="Beisel K.W."/>
            <person name="Bersano T."/>
            <person name="Bono H."/>
            <person name="Chalk A.M."/>
            <person name="Chiu K.P."/>
            <person name="Choudhary V."/>
            <person name="Christoffels A."/>
            <person name="Clutterbuck D.R."/>
            <person name="Crowe M.L."/>
            <person name="Dalla E."/>
            <person name="Dalrymple B.P."/>
            <person name="de Bono B."/>
            <person name="Della Gatta G."/>
            <person name="di Bernardo D."/>
            <person name="Down T."/>
            <person name="Engstrom P."/>
            <person name="Fagiolini M."/>
            <person name="Faulkner G."/>
            <person name="Fletcher C.F."/>
            <person name="Fukushima T."/>
            <person name="Furuno M."/>
            <person name="Futaki S."/>
            <person name="Gariboldi M."/>
            <person name="Georgii-Hemming P."/>
            <person name="Gingeras T.R."/>
            <person name="Gojobori T."/>
            <person name="Green R.E."/>
            <person name="Gustincich S."/>
            <person name="Harbers M."/>
            <person name="Hayashi Y."/>
            <person name="Hensch T.K."/>
            <person name="Hirokawa N."/>
            <person name="Hill D."/>
            <person name="Huminiecki L."/>
            <person name="Iacono M."/>
            <person name="Ikeo K."/>
            <person name="Iwama A."/>
            <person name="Ishikawa T."/>
            <person name="Jakt M."/>
            <person name="Kanapin A."/>
            <person name="Katoh M."/>
            <person name="Kawasawa Y."/>
            <person name="Kelso J."/>
            <person name="Kitamura H."/>
            <person name="Kitano H."/>
            <person name="Kollias G."/>
            <person name="Krishnan S.P."/>
            <person name="Kruger A."/>
            <person name="Kummerfeld S.K."/>
            <person name="Kurochkin I.V."/>
            <person name="Lareau L.F."/>
            <person name="Lazarevic D."/>
            <person name="Lipovich L."/>
            <person name="Liu J."/>
            <person name="Liuni S."/>
            <person name="McWilliam S."/>
            <person name="Madan Babu M."/>
            <person name="Madera M."/>
            <person name="Marchionni L."/>
            <person name="Matsuda H."/>
            <person name="Matsuzawa S."/>
            <person name="Miki H."/>
            <person name="Mignone F."/>
            <person name="Miyake S."/>
            <person name="Morris K."/>
            <person name="Mottagui-Tabar S."/>
            <person name="Mulder N."/>
            <person name="Nakano N."/>
            <person name="Nakauchi H."/>
            <person name="Ng P."/>
            <person name="Nilsson R."/>
            <person name="Nishiguchi S."/>
            <person name="Nishikawa S."/>
            <person name="Nori F."/>
            <person name="Ohara O."/>
            <person name="Okazaki Y."/>
            <person name="Orlando V."/>
            <person name="Pang K.C."/>
            <person name="Pavan W.J."/>
            <person name="Pavesi G."/>
            <person name="Pesole G."/>
            <person name="Petrovsky N."/>
            <person name="Piazza S."/>
            <person name="Reed J."/>
            <person name="Reid J.F."/>
            <person name="Ring B.Z."/>
            <person name="Ringwald M."/>
            <person name="Rost B."/>
            <person name="Ruan Y."/>
            <person name="Salzberg S.L."/>
            <person name="Sandelin A."/>
            <person name="Schneider C."/>
            <person name="Schoenbach C."/>
            <person name="Sekiguchi K."/>
            <person name="Semple C.A."/>
            <person name="Seno S."/>
            <person name="Sessa L."/>
            <person name="Sheng Y."/>
            <person name="Shibata Y."/>
            <person name="Shimada H."/>
            <person name="Shimada K."/>
            <person name="Silva D."/>
            <person name="Sinclair B."/>
            <person name="Sperling S."/>
            <person name="Stupka E."/>
            <person name="Sugiura K."/>
            <person name="Sultana R."/>
            <person name="Takenaka Y."/>
            <person name="Taki K."/>
            <person name="Tammoja K."/>
            <person name="Tan S.L."/>
            <person name="Tang S."/>
            <person name="Taylor M.S."/>
            <person name="Tegner J."/>
            <person name="Teichmann S.A."/>
            <person name="Ueda H.R."/>
            <person name="van Nimwegen E."/>
            <person name="Verardo R."/>
            <person name="Wei C.L."/>
            <person name="Yagi K."/>
            <person name="Yamanishi H."/>
            <person name="Zabarovsky E."/>
            <person name="Zhu S."/>
            <person name="Zimmer A."/>
            <person name="Hide W."/>
            <person name="Bult C."/>
            <person name="Grimmond S.M."/>
            <person name="Teasdale R.D."/>
            <person name="Liu E.T."/>
            <person name="Brusic V."/>
            <person name="Quackenbush J."/>
            <person name="Wahlestedt C."/>
            <person name="Mattick J.S."/>
            <person name="Hume D.A."/>
            <person name="Kai C."/>
            <person name="Sasaki D."/>
            <person name="Tomaru Y."/>
            <person name="Fukuda S."/>
            <person name="Kanamori-Katayama M."/>
            <person name="Suzuki M."/>
            <person name="Aoki J."/>
            <person name="Arakawa T."/>
            <person name="Iida J."/>
            <person name="Imamura K."/>
            <person name="Itoh M."/>
            <person name="Kato T."/>
            <person name="Kawaji H."/>
            <person name="Kawagashira N."/>
            <person name="Kawashima T."/>
            <person name="Kojima M."/>
            <person name="Kondo S."/>
            <person name="Konno H."/>
            <person name="Nakano K."/>
            <person name="Ninomiya N."/>
            <person name="Nishio T."/>
            <person name="Okada M."/>
            <person name="Plessy C."/>
            <person name="Shibata K."/>
            <person name="Shiraki T."/>
            <person name="Suzuki S."/>
            <person name="Tagami M."/>
            <person name="Waki K."/>
            <person name="Watahiki A."/>
            <person name="Okamura-Oho Y."/>
            <person name="Suzuki H."/>
            <person name="Kawai J."/>
            <person name="Hayashizaki Y."/>
        </authorList>
    </citation>
    <scope>NUCLEOTIDE SEQUENCE [LARGE SCALE MRNA]</scope>
    <source>
        <strain>C57BL/6J</strain>
        <tissue>Head</tissue>
        <tissue>Thymus</tissue>
    </source>
</reference>
<reference key="2">
    <citation type="journal article" date="2004" name="Genome Res.">
        <title>The status, quality, and expansion of the NIH full-length cDNA project: the Mammalian Gene Collection (MGC).</title>
        <authorList>
            <consortium name="The MGC Project Team"/>
        </authorList>
    </citation>
    <scope>NUCLEOTIDE SEQUENCE [LARGE SCALE MRNA]</scope>
    <source>
        <strain>C57BL/6J</strain>
        <tissue>Brain</tissue>
    </source>
</reference>
<organism>
    <name type="scientific">Mus musculus</name>
    <name type="common">Mouse</name>
    <dbReference type="NCBI Taxonomy" id="10090"/>
    <lineage>
        <taxon>Eukaryota</taxon>
        <taxon>Metazoa</taxon>
        <taxon>Chordata</taxon>
        <taxon>Craniata</taxon>
        <taxon>Vertebrata</taxon>
        <taxon>Euteleostomi</taxon>
        <taxon>Mammalia</taxon>
        <taxon>Eutheria</taxon>
        <taxon>Euarchontoglires</taxon>
        <taxon>Glires</taxon>
        <taxon>Rodentia</taxon>
        <taxon>Myomorpha</taxon>
        <taxon>Muroidea</taxon>
        <taxon>Muridae</taxon>
        <taxon>Murinae</taxon>
        <taxon>Mus</taxon>
        <taxon>Mus</taxon>
    </lineage>
</organism>
<evidence type="ECO:0000255" key="1">
    <source>
        <dbReference type="PROSITE-ProRule" id="PRU00649"/>
    </source>
</evidence>
<evidence type="ECO:0000255" key="2">
    <source>
        <dbReference type="PROSITE-ProRule" id="PRU00651"/>
    </source>
</evidence>
<evidence type="ECO:0000256" key="3">
    <source>
        <dbReference type="SAM" id="MobiDB-lite"/>
    </source>
</evidence>
<evidence type="ECO:0000305" key="4"/>
<dbReference type="EMBL" id="AK041519">
    <property type="protein sequence ID" value="BAC30970.1"/>
    <property type="molecule type" value="mRNA"/>
</dbReference>
<dbReference type="EMBL" id="AK140929">
    <property type="protein sequence ID" value="BAE24521.1"/>
    <property type="molecule type" value="mRNA"/>
</dbReference>
<dbReference type="EMBL" id="BC067008">
    <property type="status" value="NOT_ANNOTATED_CDS"/>
    <property type="molecule type" value="mRNA"/>
</dbReference>
<dbReference type="CCDS" id="CCDS53249.1"/>
<dbReference type="RefSeq" id="NP_001007578.2">
    <property type="nucleotide sequence ID" value="NM_001007577.2"/>
</dbReference>
<dbReference type="RefSeq" id="XP_006528926.1">
    <property type="nucleotide sequence ID" value="XM_006528863.5"/>
</dbReference>
<dbReference type="RefSeq" id="XP_011246129.1">
    <property type="nucleotide sequence ID" value="XM_011247827.4"/>
</dbReference>
<dbReference type="SMR" id="Q3US16"/>
<dbReference type="BioGRID" id="232829">
    <property type="interactions" value="4"/>
</dbReference>
<dbReference type="FunCoup" id="Q3US16">
    <property type="interactions" value="1921"/>
</dbReference>
<dbReference type="STRING" id="10090.ENSMUSP00000107806"/>
<dbReference type="iPTMnet" id="Q3US16"/>
<dbReference type="PhosphoSitePlus" id="Q3US16"/>
<dbReference type="PaxDb" id="10090-ENSMUSP00000107806"/>
<dbReference type="Antibodypedia" id="400">
    <property type="antibodies" value="15 antibodies from 7 providers"/>
</dbReference>
<dbReference type="DNASU" id="245695"/>
<dbReference type="Ensembl" id="ENSMUST00000112188.8">
    <property type="protein sequence ID" value="ENSMUSP00000107806.2"/>
    <property type="gene ID" value="ENSMUSG00000051224.14"/>
</dbReference>
<dbReference type="Ensembl" id="ENSMUST00000180322.2">
    <property type="protein sequence ID" value="ENSMUSP00000136691.2"/>
    <property type="gene ID" value="ENSMUSG00000051224.14"/>
</dbReference>
<dbReference type="GeneID" id="245695"/>
<dbReference type="KEGG" id="mmu:245695"/>
<dbReference type="UCSC" id="uc009uwv.1">
    <property type="organism name" value="mouse"/>
</dbReference>
<dbReference type="AGR" id="MGI:2685236"/>
<dbReference type="CTD" id="170082"/>
<dbReference type="MGI" id="MGI:2685236">
    <property type="gene designation" value="Tceanc"/>
</dbReference>
<dbReference type="VEuPathDB" id="HostDB:ENSMUSG00000051224"/>
<dbReference type="eggNOG" id="KOG1105">
    <property type="taxonomic scope" value="Eukaryota"/>
</dbReference>
<dbReference type="GeneTree" id="ENSGT00940000162067"/>
<dbReference type="HOGENOM" id="CLU_890113_0_0_1"/>
<dbReference type="InParanoid" id="Q3US16"/>
<dbReference type="OMA" id="HSRWVCL"/>
<dbReference type="OrthoDB" id="44867at2759"/>
<dbReference type="PhylomeDB" id="Q3US16"/>
<dbReference type="TreeFam" id="TF314970"/>
<dbReference type="BioGRID-ORCS" id="245695">
    <property type="hits" value="3 hits in 76 CRISPR screens"/>
</dbReference>
<dbReference type="ChiTaRS" id="Tceanc">
    <property type="organism name" value="mouse"/>
</dbReference>
<dbReference type="PRO" id="PR:Q3US16"/>
<dbReference type="Proteomes" id="UP000000589">
    <property type="component" value="Chromosome X"/>
</dbReference>
<dbReference type="RNAct" id="Q3US16">
    <property type="molecule type" value="protein"/>
</dbReference>
<dbReference type="Bgee" id="ENSMUSG00000051224">
    <property type="expression patterns" value="Expressed in placenta labyrinth and 171 other cell types or tissues"/>
</dbReference>
<dbReference type="ExpressionAtlas" id="Q3US16">
    <property type="expression patterns" value="baseline and differential"/>
</dbReference>
<dbReference type="GO" id="GO:0006351">
    <property type="term" value="P:DNA-templated transcription"/>
    <property type="evidence" value="ECO:0007669"/>
    <property type="project" value="InterPro"/>
</dbReference>
<dbReference type="Gene3D" id="2.20.25.10">
    <property type="match status" value="1"/>
</dbReference>
<dbReference type="Gene3D" id="1.20.930.10">
    <property type="entry name" value="Conserved domain common to transcription factors TFIIS, elongin A, CRSP70"/>
    <property type="match status" value="1"/>
</dbReference>
<dbReference type="Gene3D" id="1.10.472.30">
    <property type="entry name" value="Transcription elongation factor S-II, central domain"/>
    <property type="match status" value="1"/>
</dbReference>
<dbReference type="InterPro" id="IPR035100">
    <property type="entry name" value="TF_IIS-typ"/>
</dbReference>
<dbReference type="InterPro" id="IPR035441">
    <property type="entry name" value="TFIIS/LEDGF_dom_sf"/>
</dbReference>
<dbReference type="InterPro" id="IPR003618">
    <property type="entry name" value="TFIIS_cen_dom"/>
</dbReference>
<dbReference type="InterPro" id="IPR036575">
    <property type="entry name" value="TFIIS_cen_dom_sf"/>
</dbReference>
<dbReference type="InterPro" id="IPR017923">
    <property type="entry name" value="TFIIS_N"/>
</dbReference>
<dbReference type="PANTHER" id="PTHR11477:SF7">
    <property type="entry name" value="TRANSCRIPTION ELONGATION FACTOR A N-TERMINAL AND CENTRAL DOMAIN-CONTAINING PROTEIN"/>
    <property type="match status" value="1"/>
</dbReference>
<dbReference type="PANTHER" id="PTHR11477">
    <property type="entry name" value="TRANSCRIPTION FACTOR S-II ZINC FINGER DOMAIN-CONTAINING PROTEIN"/>
    <property type="match status" value="1"/>
</dbReference>
<dbReference type="Pfam" id="PF08711">
    <property type="entry name" value="Med26"/>
    <property type="match status" value="1"/>
</dbReference>
<dbReference type="Pfam" id="PF07500">
    <property type="entry name" value="TFIIS_M"/>
    <property type="match status" value="1"/>
</dbReference>
<dbReference type="PIRSF" id="PIRSF006704">
    <property type="entry name" value="TF_IIS"/>
    <property type="match status" value="1"/>
</dbReference>
<dbReference type="SMART" id="SM00510">
    <property type="entry name" value="TFS2M"/>
    <property type="match status" value="1"/>
</dbReference>
<dbReference type="SUPFAM" id="SSF47676">
    <property type="entry name" value="Conserved domain common to transcription factors TFIIS, elongin A, CRSP70"/>
    <property type="match status" value="1"/>
</dbReference>
<dbReference type="SUPFAM" id="SSF46942">
    <property type="entry name" value="Elongation factor TFIIS domain 2"/>
    <property type="match status" value="1"/>
</dbReference>
<dbReference type="PROSITE" id="PS51321">
    <property type="entry name" value="TFIIS_CENTRAL"/>
    <property type="match status" value="1"/>
</dbReference>
<dbReference type="PROSITE" id="PS51319">
    <property type="entry name" value="TFIIS_N"/>
    <property type="match status" value="1"/>
</dbReference>
<accession>Q3US16</accession>
<accession>Q6NXL9</accession>
<accession>Q8BY92</accession>
<keyword id="KW-1185">Reference proteome</keyword>
<gene>
    <name type="primary">Tceanc</name>
</gene>
<name>TEANC_MOUSE</name>
<feature type="chain" id="PRO_0000259661" description="Transcription elongation factor A N-terminal and central domain-containing protein">
    <location>
        <begin position="1"/>
        <end position="359"/>
    </location>
</feature>
<feature type="domain" description="TFIIS N-terminal" evidence="1">
    <location>
        <begin position="1"/>
        <end position="82"/>
    </location>
</feature>
<feature type="domain" description="TFIIS central" evidence="2">
    <location>
        <begin position="182"/>
        <end position="298"/>
    </location>
</feature>
<feature type="region of interest" description="Disordered" evidence="3">
    <location>
        <begin position="84"/>
        <end position="118"/>
    </location>
</feature>
<feature type="compositionally biased region" description="Polar residues" evidence="3">
    <location>
        <begin position="104"/>
        <end position="118"/>
    </location>
</feature>
<sequence>MSDKNQIIARASLIEQLVSKRYFEDIGKQLTELEMIYVSKEHLQETDVVRAVYRVLKNCPSVTLKKKAKCLLAKWRGFYKSTHCKPRQSPKVLHTNANKEESAAVSQDVSQDETSGSSHSEIMGLCSSLSRLLPQDAAKPAAAIGSESSTAQMEINEGYLKGDDSECTRKSSGVFQGTLVSVRSKCVELLYTALASSCTDHTEVHIWQNLAREIEEHIFTLHSNNIKKYKTSIRSKVANLKNPRNFHLQQNFLSGTMSAREFAEMSVLDMASQELKQLRASYTESSIQEHCLPQSVDGTWTNKIKCRRCDKYNCKVTVIARGTLFLPSWVQNSNPDEQMTYVICNECGEQWYHNNWVCL</sequence>
<proteinExistence type="evidence at transcript level"/>
<protein>
    <recommendedName>
        <fullName>Transcription elongation factor A N-terminal and central domain-containing protein</fullName>
    </recommendedName>
    <alternativeName>
        <fullName>TFIIS central domain-containing protein 1</fullName>
    </alternativeName>
</protein>
<comment type="sequence caution" evidence="4">
    <conflict type="frameshift">
        <sequence resource="EMBL" id="BC067008"/>
    </conflict>
</comment>